<accession>P28311</accession>
<accession>A3KPC1</accession>
<accession>Q9QZL4</accession>
<dbReference type="EMBL" id="AF178040">
    <property type="protein sequence ID" value="AAD51759.1"/>
    <property type="molecule type" value="Genomic_DNA"/>
</dbReference>
<dbReference type="EMBL" id="BC134360">
    <property type="protein sequence ID" value="AAI34361.1"/>
    <property type="molecule type" value="mRNA"/>
</dbReference>
<dbReference type="EMBL" id="U03032">
    <property type="protein sequence ID" value="AAA57172.1"/>
    <property type="molecule type" value="mRNA"/>
</dbReference>
<dbReference type="PIR" id="I48887">
    <property type="entry name" value="I48887"/>
</dbReference>
<dbReference type="RefSeq" id="NP_034169.2">
    <property type="nucleotide sequence ID" value="NM_010039.2"/>
</dbReference>
<dbReference type="PDB" id="1TV0">
    <property type="method" value="NMR"/>
    <property type="chains" value="A=61-92"/>
</dbReference>
<dbReference type="PDB" id="2GW9">
    <property type="method" value="NMR"/>
    <property type="chains" value="A=61-92"/>
</dbReference>
<dbReference type="PDB" id="2GWP">
    <property type="method" value="NMR"/>
    <property type="chains" value="A=61-92"/>
</dbReference>
<dbReference type="PDB" id="2LEW">
    <property type="method" value="NMR"/>
    <property type="chains" value="A=61-92"/>
</dbReference>
<dbReference type="PDB" id="2LEY">
    <property type="method" value="NMR"/>
    <property type="chains" value="A=61-92"/>
</dbReference>
<dbReference type="PDB" id="7RC7">
    <property type="method" value="NMR"/>
    <property type="chains" value="A=61-92"/>
</dbReference>
<dbReference type="PDB" id="7RC8">
    <property type="method" value="NMR"/>
    <property type="chains" value="A=61-92"/>
</dbReference>
<dbReference type="PDBsum" id="1TV0"/>
<dbReference type="PDBsum" id="2GW9"/>
<dbReference type="PDBsum" id="2GWP"/>
<dbReference type="PDBsum" id="2LEW"/>
<dbReference type="PDBsum" id="2LEY"/>
<dbReference type="PDBsum" id="7RC7"/>
<dbReference type="PDBsum" id="7RC8"/>
<dbReference type="SMR" id="P28311"/>
<dbReference type="FunCoup" id="P28311">
    <property type="interactions" value="38"/>
</dbReference>
<dbReference type="TCDB" id="1.C.19.1.5">
    <property type="family name" value="the defensin (defensin) family"/>
</dbReference>
<dbReference type="PeptideAtlas" id="P28311"/>
<dbReference type="DNASU" id="13238"/>
<dbReference type="GeneID" id="13238"/>
<dbReference type="KEGG" id="mmu:13238"/>
<dbReference type="UCSC" id="uc029wro.1">
    <property type="organism name" value="mouse"/>
</dbReference>
<dbReference type="AGR" id="MGI:99584"/>
<dbReference type="CTD" id="1669"/>
<dbReference type="MGI" id="MGI:99584">
    <property type="gene designation" value="Defa4"/>
</dbReference>
<dbReference type="InParanoid" id="P28311"/>
<dbReference type="PhylomeDB" id="P28311"/>
<dbReference type="BioGRID-ORCS" id="13238">
    <property type="hits" value="1 hit in 17 CRISPR screens"/>
</dbReference>
<dbReference type="EvolutionaryTrace" id="P28311"/>
<dbReference type="PRO" id="PR:P28311"/>
<dbReference type="Proteomes" id="UP000000589">
    <property type="component" value="Unplaced"/>
</dbReference>
<dbReference type="RNAct" id="P28311">
    <property type="molecule type" value="protein"/>
</dbReference>
<dbReference type="GO" id="GO:0005615">
    <property type="term" value="C:extracellular space"/>
    <property type="evidence" value="ECO:0000314"/>
    <property type="project" value="MGI"/>
</dbReference>
<dbReference type="GO" id="GO:0030133">
    <property type="term" value="C:transport vesicle"/>
    <property type="evidence" value="ECO:0007669"/>
    <property type="project" value="UniProtKB-SubCell"/>
</dbReference>
<dbReference type="GO" id="GO:0005543">
    <property type="term" value="F:phospholipid binding"/>
    <property type="evidence" value="ECO:0000314"/>
    <property type="project" value="MGI"/>
</dbReference>
<dbReference type="GO" id="GO:0019731">
    <property type="term" value="P:antibacterial humoral response"/>
    <property type="evidence" value="ECO:0000314"/>
    <property type="project" value="MGI"/>
</dbReference>
<dbReference type="GO" id="GO:0042742">
    <property type="term" value="P:defense response to bacterium"/>
    <property type="evidence" value="ECO:0000314"/>
    <property type="project" value="MGI"/>
</dbReference>
<dbReference type="GO" id="GO:0051673">
    <property type="term" value="P:disruption of plasma membrane integrity in another organism"/>
    <property type="evidence" value="ECO:0000314"/>
    <property type="project" value="MGI"/>
</dbReference>
<dbReference type="GO" id="GO:0031640">
    <property type="term" value="P:killing of cells of another organism"/>
    <property type="evidence" value="ECO:0000315"/>
    <property type="project" value="CAFA"/>
</dbReference>
<dbReference type="InterPro" id="IPR016327">
    <property type="entry name" value="Alpha-defensin"/>
</dbReference>
<dbReference type="InterPro" id="IPR002366">
    <property type="entry name" value="Alpha-defensin_N"/>
</dbReference>
<dbReference type="InterPro" id="IPR006080">
    <property type="entry name" value="Beta/alpha-defensin_C"/>
</dbReference>
<dbReference type="PANTHER" id="PTHR11876">
    <property type="entry name" value="ALPHA-DEFENSIN 1"/>
    <property type="match status" value="1"/>
</dbReference>
<dbReference type="PANTHER" id="PTHR11876:SF2">
    <property type="entry name" value="ALPHA-DEFENSIN 1-RELATED"/>
    <property type="match status" value="1"/>
</dbReference>
<dbReference type="Pfam" id="PF00879">
    <property type="entry name" value="Defensin_propep"/>
    <property type="match status" value="1"/>
</dbReference>
<dbReference type="PIRSF" id="PIRSF001875">
    <property type="entry name" value="Alpha-defensin"/>
    <property type="match status" value="1"/>
</dbReference>
<dbReference type="SMART" id="SM01418">
    <property type="entry name" value="Defensin_propep"/>
    <property type="match status" value="1"/>
</dbReference>
<dbReference type="SMART" id="SM00048">
    <property type="entry name" value="DEFSN"/>
    <property type="match status" value="1"/>
</dbReference>
<dbReference type="SUPFAM" id="SSF57392">
    <property type="entry name" value="Defensin-like"/>
    <property type="match status" value="1"/>
</dbReference>
<gene>
    <name evidence="10" type="primary">Defa4</name>
    <name evidence="7" type="synonym">Defcr4</name>
</gene>
<sequence length="92" mass="10272">MKTLVLLSALVLLAFQVQADPIQNTDEETKTEEQPGEEDQAVSISFGGQEGSALHEKSLRGLLCYCRKGHCKRGERVRGTCGIRFLYCCPRR</sequence>
<reference key="1">
    <citation type="journal article" date="1999" name="Infect. Immun.">
        <title>Peptide localization and gene structure of cryptdin 4, a differentially expressed mouse Paneth cell alpha-defensin.</title>
        <authorList>
            <person name="Ouellette A.J."/>
            <person name="Darmoul D."/>
            <person name="Tran D."/>
            <person name="Huttner K.M."/>
            <person name="Yuan J."/>
            <person name="Selsted M.E."/>
        </authorList>
    </citation>
    <scope>NUCLEOTIDE SEQUENCE [GENOMIC DNA]</scope>
    <scope>SUBCELLULAR LOCATION</scope>
    <scope>TISSUE SPECIFICITY</scope>
    <source>
        <strain>129/SvJ</strain>
    </source>
</reference>
<reference key="2">
    <citation type="journal article" date="2004" name="Genome Res.">
        <title>The status, quality, and expansion of the NIH full-length cDNA project: the Mammalian Gene Collection (MGC).</title>
        <authorList>
            <consortium name="The MGC Project Team"/>
        </authorList>
    </citation>
    <scope>NUCLEOTIDE SEQUENCE [LARGE SCALE MRNA]</scope>
</reference>
<reference key="3">
    <citation type="journal article" date="1994" name="Infect. Immun.">
        <title>Mouse Paneth cell defensins: primary structures and antibacterial activities of numerous cryptdin isoforms.</title>
        <authorList>
            <person name="Ouellette A.J."/>
            <person name="Hsieh M.M."/>
            <person name="Nosek M.T."/>
            <person name="Cano-Gauci D.F."/>
            <person name="Huttner K.M."/>
            <person name="Buick R.N."/>
            <person name="Selsted M.E."/>
        </authorList>
    </citation>
    <scope>NUCLEOTIDE SEQUENCE OF 4-92</scope>
    <scope>FUNCTION</scope>
    <source>
        <strain>C3H/HeJ</strain>
        <strain>Swiss Webster</strain>
        <tissue>Intestinal crypt</tissue>
    </source>
</reference>
<reference key="4">
    <citation type="journal article" date="1994" name="Genomics">
        <title>Structure and diversity of the murine cryptdin gene family.</title>
        <authorList>
            <person name="Huttner K.M."/>
            <person name="Selsted M.E."/>
            <person name="Ouellette A.J."/>
        </authorList>
    </citation>
    <scope>NUCLEOTIDE SEQUENCE OF 59-92</scope>
    <source>
        <strain>129/SvJ</strain>
        <strain>C3H/HeJ</strain>
        <tissue>Small intestine</tissue>
    </source>
</reference>
<reference key="5">
    <citation type="journal article" date="1992" name="J. Cell Biol.">
        <title>Enteric defensins: antibiotic peptide components of intestinal host defense.</title>
        <authorList>
            <person name="Selsted M.E."/>
            <person name="Miller S.I."/>
            <person name="Henschen A.H."/>
            <person name="Ouellette A.J."/>
        </authorList>
    </citation>
    <scope>PROTEIN SEQUENCE OF 61-92</scope>
    <source>
        <strain>CD-1</strain>
        <tissue>Ileum</tissue>
        <tissue>Jejunum</tissue>
    </source>
</reference>
<reference key="6">
    <citation type="journal article" date="2004" name="Biochemistry">
        <title>Solution structure of cryptdin-4, a mouse paneth cell alpha-defensin.</title>
        <authorList>
            <person name="Jing W."/>
            <person name="Hunter H.N."/>
            <person name="Tanabe H."/>
            <person name="Ouellette A.J."/>
            <person name="Vogel H.J."/>
        </authorList>
    </citation>
    <scope>STRUCTURE BY NMR OF 61-92</scope>
    <scope>DISULFIDE BONDS</scope>
</reference>
<feature type="signal peptide" evidence="2">
    <location>
        <begin position="1"/>
        <end position="19"/>
    </location>
</feature>
<feature type="propeptide" id="PRO_0000006823">
    <location>
        <begin position="20"/>
        <end position="58"/>
    </location>
</feature>
<feature type="peptide" id="PRO_0000006824" description="Defensin alpha 4">
    <location>
        <begin position="59"/>
        <end position="92"/>
    </location>
</feature>
<feature type="region of interest" description="Disordered" evidence="3">
    <location>
        <begin position="23"/>
        <end position="42"/>
    </location>
</feature>
<feature type="disulfide bond" evidence="5">
    <location>
        <begin position="64"/>
        <end position="89"/>
    </location>
</feature>
<feature type="disulfide bond" evidence="5">
    <location>
        <begin position="66"/>
        <end position="81"/>
    </location>
</feature>
<feature type="disulfide bond" evidence="5">
    <location>
        <begin position="71"/>
        <end position="88"/>
    </location>
</feature>
<feature type="sequence conflict" description="In Ref. 2; AAI34361." evidence="9" ref="2">
    <original>K</original>
    <variation>N</variation>
    <location>
        <position position="30"/>
    </location>
</feature>
<feature type="strand" evidence="11">
    <location>
        <begin position="65"/>
        <end position="69"/>
    </location>
</feature>
<feature type="strand" evidence="12">
    <location>
        <begin position="77"/>
        <end position="80"/>
    </location>
</feature>
<feature type="strand" evidence="11">
    <location>
        <begin position="81"/>
        <end position="88"/>
    </location>
</feature>
<protein>
    <recommendedName>
        <fullName evidence="10">Defensin alpha 4</fullName>
    </recommendedName>
    <alternativeName>
        <fullName evidence="7">Defensin-related cryptdin-4</fullName>
    </alternativeName>
</protein>
<keyword id="KW-0002">3D-structure</keyword>
<keyword id="KW-0044">Antibiotic</keyword>
<keyword id="KW-0929">Antimicrobial</keyword>
<keyword id="KW-0968">Cytoplasmic vesicle</keyword>
<keyword id="KW-0211">Defensin</keyword>
<keyword id="KW-0903">Direct protein sequencing</keyword>
<keyword id="KW-1015">Disulfide bond</keyword>
<keyword id="KW-1185">Reference proteome</keyword>
<keyword id="KW-0964">Secreted</keyword>
<keyword id="KW-0732">Signal</keyword>
<evidence type="ECO:0000250" key="1">
    <source>
        <dbReference type="UniProtKB" id="Q01523"/>
    </source>
</evidence>
<evidence type="ECO:0000255" key="2"/>
<evidence type="ECO:0000256" key="3">
    <source>
        <dbReference type="SAM" id="MobiDB-lite"/>
    </source>
</evidence>
<evidence type="ECO:0000269" key="4">
    <source>
    </source>
</evidence>
<evidence type="ECO:0000269" key="5">
    <source>
    </source>
</evidence>
<evidence type="ECO:0000269" key="6">
    <source>
    </source>
</evidence>
<evidence type="ECO:0000303" key="7">
    <source>
    </source>
</evidence>
<evidence type="ECO:0000303" key="8">
    <source>
    </source>
</evidence>
<evidence type="ECO:0000305" key="9"/>
<evidence type="ECO:0000312" key="10">
    <source>
        <dbReference type="MGI" id="MGI:99584"/>
    </source>
</evidence>
<evidence type="ECO:0007829" key="11">
    <source>
        <dbReference type="PDB" id="1TV0"/>
    </source>
</evidence>
<evidence type="ECO:0007829" key="12">
    <source>
        <dbReference type="PDB" id="2LEW"/>
    </source>
</evidence>
<organism>
    <name type="scientific">Mus musculus</name>
    <name type="common">Mouse</name>
    <dbReference type="NCBI Taxonomy" id="10090"/>
    <lineage>
        <taxon>Eukaryota</taxon>
        <taxon>Metazoa</taxon>
        <taxon>Chordata</taxon>
        <taxon>Craniata</taxon>
        <taxon>Vertebrata</taxon>
        <taxon>Euteleostomi</taxon>
        <taxon>Mammalia</taxon>
        <taxon>Eutheria</taxon>
        <taxon>Euarchontoglires</taxon>
        <taxon>Glires</taxon>
        <taxon>Rodentia</taxon>
        <taxon>Myomorpha</taxon>
        <taxon>Muroidea</taxon>
        <taxon>Muridae</taxon>
        <taxon>Murinae</taxon>
        <taxon>Mus</taxon>
        <taxon>Mus</taxon>
    </lineage>
</organism>
<name>DEFA4_MOUSE</name>
<proteinExistence type="evidence at protein level"/>
<comment type="function">
    <text evidence="6 8">Host-defense peptide that has antimicrobial activity (PubMed:7927786). Exhibits activity against Gram-negative E.coli (in vitro) (PubMed:7927786). Probably contributes to the antimicrobial barrier function of the small bowel mucosa (PubMed:7927786).</text>
</comment>
<comment type="subcellular location">
    <subcellularLocation>
        <location evidence="1">Secreted</location>
    </subcellularLocation>
    <subcellularLocation>
        <location evidence="4">Cytoplasmic vesicle</location>
        <location evidence="4">Secretory vesicle</location>
    </subcellularLocation>
</comment>
<comment type="tissue specificity">
    <text evidence="4">Paneth cells of the small bowel.</text>
</comment>
<comment type="similarity">
    <text evidence="9">Belongs to the alpha-defensin family.</text>
</comment>